<keyword id="KW-0687">Ribonucleoprotein</keyword>
<keyword id="KW-0689">Ribosomal protein</keyword>
<name>RL28_BORRA</name>
<sequence>MGRECEITGKRTMFGNNVPRKGLAKKKGGAGQHIGVKTKRTFKVNLINKKFFIPELGKNVSIKISASTLRSISKVGLNVFLKKNNKKIDDFI</sequence>
<dbReference type="EMBL" id="CP000993">
    <property type="protein sequence ID" value="ACH94597.1"/>
    <property type="molecule type" value="Genomic_DNA"/>
</dbReference>
<dbReference type="RefSeq" id="WP_012538111.1">
    <property type="nucleotide sequence ID" value="NZ_CP169983.1"/>
</dbReference>
<dbReference type="SMR" id="B5RRG3"/>
<dbReference type="KEGG" id="bre:BRE_352"/>
<dbReference type="HOGENOM" id="CLU_064548_3_2_12"/>
<dbReference type="Proteomes" id="UP000000612">
    <property type="component" value="Chromosome"/>
</dbReference>
<dbReference type="GO" id="GO:1990904">
    <property type="term" value="C:ribonucleoprotein complex"/>
    <property type="evidence" value="ECO:0007669"/>
    <property type="project" value="UniProtKB-KW"/>
</dbReference>
<dbReference type="GO" id="GO:0005840">
    <property type="term" value="C:ribosome"/>
    <property type="evidence" value="ECO:0007669"/>
    <property type="project" value="UniProtKB-KW"/>
</dbReference>
<dbReference type="GO" id="GO:0003735">
    <property type="term" value="F:structural constituent of ribosome"/>
    <property type="evidence" value="ECO:0007669"/>
    <property type="project" value="InterPro"/>
</dbReference>
<dbReference type="GO" id="GO:0006412">
    <property type="term" value="P:translation"/>
    <property type="evidence" value="ECO:0007669"/>
    <property type="project" value="UniProtKB-UniRule"/>
</dbReference>
<dbReference type="Gene3D" id="2.30.170.40">
    <property type="entry name" value="Ribosomal protein L28/L24"/>
    <property type="match status" value="1"/>
</dbReference>
<dbReference type="HAMAP" id="MF_00373">
    <property type="entry name" value="Ribosomal_bL28"/>
    <property type="match status" value="1"/>
</dbReference>
<dbReference type="InterPro" id="IPR026569">
    <property type="entry name" value="Ribosomal_bL28"/>
</dbReference>
<dbReference type="InterPro" id="IPR034704">
    <property type="entry name" value="Ribosomal_bL28/bL31-like_sf"/>
</dbReference>
<dbReference type="InterPro" id="IPR001383">
    <property type="entry name" value="Ribosomal_bL28_bact-type"/>
</dbReference>
<dbReference type="InterPro" id="IPR037147">
    <property type="entry name" value="Ribosomal_bL28_sf"/>
</dbReference>
<dbReference type="NCBIfam" id="TIGR00009">
    <property type="entry name" value="L28"/>
    <property type="match status" value="1"/>
</dbReference>
<dbReference type="PANTHER" id="PTHR13528">
    <property type="entry name" value="39S RIBOSOMAL PROTEIN L28, MITOCHONDRIAL"/>
    <property type="match status" value="1"/>
</dbReference>
<dbReference type="PANTHER" id="PTHR13528:SF2">
    <property type="entry name" value="LARGE RIBOSOMAL SUBUNIT PROTEIN BL28M"/>
    <property type="match status" value="1"/>
</dbReference>
<dbReference type="Pfam" id="PF00830">
    <property type="entry name" value="Ribosomal_L28"/>
    <property type="match status" value="1"/>
</dbReference>
<dbReference type="SUPFAM" id="SSF143800">
    <property type="entry name" value="L28p-like"/>
    <property type="match status" value="1"/>
</dbReference>
<proteinExistence type="inferred from homology"/>
<reference key="1">
    <citation type="journal article" date="2008" name="PLoS Genet.">
        <title>The genome of Borrelia recurrentis, the agent of deadly louse-borne relapsing fever, is a degraded subset of tick-borne Borrelia duttonii.</title>
        <authorList>
            <person name="Lescot M."/>
            <person name="Audic S."/>
            <person name="Robert C."/>
            <person name="Nguyen T.T."/>
            <person name="Blanc G."/>
            <person name="Cutler S.J."/>
            <person name="Wincker P."/>
            <person name="Couloux A."/>
            <person name="Claverie J.-M."/>
            <person name="Raoult D."/>
            <person name="Drancourt M."/>
        </authorList>
    </citation>
    <scope>NUCLEOTIDE SEQUENCE [LARGE SCALE GENOMIC DNA]</scope>
    <source>
        <strain>A1</strain>
    </source>
</reference>
<organism>
    <name type="scientific">Borrelia recurrentis (strain A1)</name>
    <dbReference type="NCBI Taxonomy" id="412418"/>
    <lineage>
        <taxon>Bacteria</taxon>
        <taxon>Pseudomonadati</taxon>
        <taxon>Spirochaetota</taxon>
        <taxon>Spirochaetia</taxon>
        <taxon>Spirochaetales</taxon>
        <taxon>Borreliaceae</taxon>
        <taxon>Borrelia</taxon>
    </lineage>
</organism>
<accession>B5RRG3</accession>
<protein>
    <recommendedName>
        <fullName evidence="1">Large ribosomal subunit protein bL28</fullName>
    </recommendedName>
    <alternativeName>
        <fullName evidence="2">50S ribosomal protein L28</fullName>
    </alternativeName>
</protein>
<comment type="similarity">
    <text evidence="1">Belongs to the bacterial ribosomal protein bL28 family.</text>
</comment>
<gene>
    <name evidence="1" type="primary">rpmB</name>
    <name type="ordered locus">BRE_352</name>
</gene>
<feature type="chain" id="PRO_1000121592" description="Large ribosomal subunit protein bL28">
    <location>
        <begin position="1"/>
        <end position="92"/>
    </location>
</feature>
<evidence type="ECO:0000255" key="1">
    <source>
        <dbReference type="HAMAP-Rule" id="MF_00373"/>
    </source>
</evidence>
<evidence type="ECO:0000305" key="2"/>